<gene>
    <name type="ordered locus">TP03_0709</name>
</gene>
<proteinExistence type="inferred from homology"/>
<feature type="chain" id="PRO_0000414147" description="tRNA (guanine(37)-N(1))-methyltransferase">
    <location>
        <begin position="1"/>
        <end position="470"/>
    </location>
</feature>
<feature type="binding site" evidence="1">
    <location>
        <begin position="304"/>
        <end position="305"/>
    </location>
    <ligand>
        <name>S-adenosyl-L-methionine</name>
        <dbReference type="ChEBI" id="CHEBI:59789"/>
    </ligand>
</feature>
<feature type="binding site" evidence="1">
    <location>
        <begin position="332"/>
        <end position="333"/>
    </location>
    <ligand>
        <name>S-adenosyl-L-methionine</name>
        <dbReference type="ChEBI" id="CHEBI:59789"/>
    </ligand>
</feature>
<feature type="binding site" evidence="1">
    <location>
        <position position="370"/>
    </location>
    <ligand>
        <name>S-adenosyl-L-methionine</name>
        <dbReference type="ChEBI" id="CHEBI:59789"/>
    </ligand>
</feature>
<dbReference type="EC" id="2.1.1.228" evidence="1"/>
<dbReference type="EMBL" id="AAGK01000006">
    <property type="protein sequence ID" value="EAN30550.1"/>
    <property type="molecule type" value="Genomic_DNA"/>
</dbReference>
<dbReference type="RefSeq" id="XP_762833.1">
    <property type="nucleotide sequence ID" value="XM_757740.1"/>
</dbReference>
<dbReference type="SMR" id="Q4MYY2"/>
<dbReference type="STRING" id="5875.Q4MYY2"/>
<dbReference type="EnsemblProtists" id="EAN30550">
    <property type="protein sequence ID" value="EAN30550"/>
    <property type="gene ID" value="TP03_0709"/>
</dbReference>
<dbReference type="KEGG" id="tpv:TP03_0709"/>
<dbReference type="VEuPathDB" id="PiroplasmaDB:TpMuguga_03g00709"/>
<dbReference type="eggNOG" id="KOG2078">
    <property type="taxonomic scope" value="Eukaryota"/>
</dbReference>
<dbReference type="InParanoid" id="Q4MYY2"/>
<dbReference type="OMA" id="NCMVFAN"/>
<dbReference type="Proteomes" id="UP000001949">
    <property type="component" value="Unassembled WGS sequence"/>
</dbReference>
<dbReference type="GO" id="GO:0005759">
    <property type="term" value="C:mitochondrial matrix"/>
    <property type="evidence" value="ECO:0007669"/>
    <property type="project" value="UniProtKB-SubCell"/>
</dbReference>
<dbReference type="GO" id="GO:0005634">
    <property type="term" value="C:nucleus"/>
    <property type="evidence" value="ECO:0007669"/>
    <property type="project" value="UniProtKB-SubCell"/>
</dbReference>
<dbReference type="GO" id="GO:0052906">
    <property type="term" value="F:tRNA (guanine(37)-N1)-methyltransferase activity"/>
    <property type="evidence" value="ECO:0007669"/>
    <property type="project" value="UniProtKB-UniRule"/>
</dbReference>
<dbReference type="GO" id="GO:0002939">
    <property type="term" value="P:tRNA N1-guanine methylation"/>
    <property type="evidence" value="ECO:0007669"/>
    <property type="project" value="TreeGrafter"/>
</dbReference>
<dbReference type="FunFam" id="3.30.300.110:FF:000001">
    <property type="entry name" value="tRNA (guanine(37)-N1)-methyltransferase"/>
    <property type="match status" value="1"/>
</dbReference>
<dbReference type="Gene3D" id="3.30.300.110">
    <property type="entry name" value="Met-10+ protein-like domains"/>
    <property type="match status" value="1"/>
</dbReference>
<dbReference type="Gene3D" id="3.40.50.150">
    <property type="entry name" value="Vaccinia Virus protein VP39"/>
    <property type="match status" value="1"/>
</dbReference>
<dbReference type="HAMAP" id="MF_03152">
    <property type="entry name" value="TRM5"/>
    <property type="match status" value="1"/>
</dbReference>
<dbReference type="InterPro" id="IPR030382">
    <property type="entry name" value="MeTrfase_TRM5/TYW2"/>
</dbReference>
<dbReference type="InterPro" id="IPR029063">
    <property type="entry name" value="SAM-dependent_MTases_sf"/>
</dbReference>
<dbReference type="InterPro" id="IPR056743">
    <property type="entry name" value="TRM5-TYW2-like_MTfase"/>
</dbReference>
<dbReference type="InterPro" id="IPR056744">
    <property type="entry name" value="TRM5/TYW2-like_N"/>
</dbReference>
<dbReference type="InterPro" id="IPR025792">
    <property type="entry name" value="tRNA_Gua_MeTrfase_euk"/>
</dbReference>
<dbReference type="PANTHER" id="PTHR23245:SF36">
    <property type="entry name" value="TRNA (GUANINE(37)-N1)-METHYLTRANSFERASE"/>
    <property type="match status" value="1"/>
</dbReference>
<dbReference type="PANTHER" id="PTHR23245">
    <property type="entry name" value="TRNA METHYLTRANSFERASE"/>
    <property type="match status" value="1"/>
</dbReference>
<dbReference type="Pfam" id="PF02475">
    <property type="entry name" value="TRM5-TYW2_MTfase"/>
    <property type="match status" value="1"/>
</dbReference>
<dbReference type="Pfam" id="PF25133">
    <property type="entry name" value="TYW2_N_2"/>
    <property type="match status" value="1"/>
</dbReference>
<dbReference type="SUPFAM" id="SSF53335">
    <property type="entry name" value="S-adenosyl-L-methionine-dependent methyltransferases"/>
    <property type="match status" value="1"/>
</dbReference>
<dbReference type="PROSITE" id="PS51684">
    <property type="entry name" value="SAM_MT_TRM5_TYW2"/>
    <property type="match status" value="1"/>
</dbReference>
<sequence length="470" mass="54494">MLNFFYVKYKSLFKIIAILTFNILCYCRTVHSISKNDYTISNNLKLYPYSFVNFRPSPEMSQILKKKKLDSSSSEDFIPTKRITTLEELKNYERLEERTKVTITKDKIPLFAKNDMFRNTVRNPLNSIDYYKNDESDIRTYILKRWDLLPSPLRDLITNESIDHSTVTHKIKYEDITTEEAFKLVVNDDIGVMVGFETVGHIAHLNVPEERSSIKKLIAKIIIDKHKHIKTVINKRSEVQNQFRTMDIELLAGEENYIANLVIFVILMSFSFQMKQSLLVDMFAGAGPFAIYASKKGCSVLANDLNPIGATYMKRNIEINKVHDLVKVFNMDGREFLIDVIKKNKILDKKTLECDGMALKASGKVHLIMNLPKIAIEFLGNLVMKHRFSDTLIGLADNIEEENMRKLLVHCYCFSASEEYEKEIEQRLYKSIGRKLPEYTITHVRGVSPKKQMYCIEFECPISILRGNKE</sequence>
<organism>
    <name type="scientific">Theileria parva</name>
    <name type="common">East coast fever infection agent</name>
    <dbReference type="NCBI Taxonomy" id="5875"/>
    <lineage>
        <taxon>Eukaryota</taxon>
        <taxon>Sar</taxon>
        <taxon>Alveolata</taxon>
        <taxon>Apicomplexa</taxon>
        <taxon>Aconoidasida</taxon>
        <taxon>Piroplasmida</taxon>
        <taxon>Theileriidae</taxon>
        <taxon>Theileria</taxon>
    </lineage>
</organism>
<accession>Q4MYY2</accession>
<protein>
    <recommendedName>
        <fullName evidence="1">tRNA (guanine(37)-N(1))-methyltransferase</fullName>
        <ecNumber evidence="1">2.1.1.228</ecNumber>
    </recommendedName>
    <alternativeName>
        <fullName evidence="1">M1G-methyltransferase</fullName>
    </alternativeName>
    <alternativeName>
        <fullName evidence="1">tRNA [GM37] methyltransferase</fullName>
    </alternativeName>
    <alternativeName>
        <fullName evidence="1">tRNA methyltransferase 5 homolog</fullName>
    </alternativeName>
</protein>
<reference key="1">
    <citation type="journal article" date="2005" name="Science">
        <title>Genome sequence of Theileria parva, a bovine pathogen that transforms lymphocytes.</title>
        <authorList>
            <person name="Gardner M.J."/>
            <person name="Bishop R."/>
            <person name="Shah T."/>
            <person name="de Villiers E.P."/>
            <person name="Carlton J.M."/>
            <person name="Hall N."/>
            <person name="Ren Q."/>
            <person name="Paulsen I.T."/>
            <person name="Pain A."/>
            <person name="Berriman M."/>
            <person name="Wilson R.J.M."/>
            <person name="Sato S."/>
            <person name="Ralph S.A."/>
            <person name="Mann D.J."/>
            <person name="Xiong Z."/>
            <person name="Shallom S.J."/>
            <person name="Weidman J."/>
            <person name="Jiang L."/>
            <person name="Lynn J."/>
            <person name="Weaver B."/>
            <person name="Shoaibi A."/>
            <person name="Domingo A.R."/>
            <person name="Wasawo D."/>
            <person name="Crabtree J."/>
            <person name="Wortman J.R."/>
            <person name="Haas B."/>
            <person name="Angiuoli S.V."/>
            <person name="Creasy T.H."/>
            <person name="Lu C."/>
            <person name="Suh B."/>
            <person name="Silva J.C."/>
            <person name="Utterback T.R."/>
            <person name="Feldblyum T.V."/>
            <person name="Pertea M."/>
            <person name="Allen J."/>
            <person name="Nierman W.C."/>
            <person name="Taracha E.L.N."/>
            <person name="Salzberg S.L."/>
            <person name="White O.R."/>
            <person name="Fitzhugh H.A."/>
            <person name="Morzaria S."/>
            <person name="Venter J.C."/>
            <person name="Fraser C.M."/>
            <person name="Nene V."/>
        </authorList>
    </citation>
    <scope>NUCLEOTIDE SEQUENCE [LARGE SCALE GENOMIC DNA]</scope>
    <source>
        <strain>Muguga</strain>
    </source>
</reference>
<evidence type="ECO:0000255" key="1">
    <source>
        <dbReference type="HAMAP-Rule" id="MF_03152"/>
    </source>
</evidence>
<evidence type="ECO:0000305" key="2"/>
<keyword id="KW-0963">Cytoplasm</keyword>
<keyword id="KW-0489">Methyltransferase</keyword>
<keyword id="KW-0496">Mitochondrion</keyword>
<keyword id="KW-0539">Nucleus</keyword>
<keyword id="KW-1185">Reference proteome</keyword>
<keyword id="KW-0949">S-adenosyl-L-methionine</keyword>
<keyword id="KW-0808">Transferase</keyword>
<keyword id="KW-0819">tRNA processing</keyword>
<name>TRM5_THEPA</name>
<comment type="function">
    <text evidence="1">Specifically methylates the N1 position of guanosine-37 in various cytoplasmic and mitochondrial tRNAs. Methylation is not dependent on the nature of the nucleoside 5' of the target nucleoside. This is the first step in the biosynthesis of wybutosine (yW), a modified base adjacent to the anticodon of tRNAs and required for accurate decoding.</text>
</comment>
<comment type="catalytic activity">
    <reaction evidence="1">
        <text>guanosine(37) in tRNA + S-adenosyl-L-methionine = N(1)-methylguanosine(37) in tRNA + S-adenosyl-L-homocysteine + H(+)</text>
        <dbReference type="Rhea" id="RHEA:36899"/>
        <dbReference type="Rhea" id="RHEA-COMP:10145"/>
        <dbReference type="Rhea" id="RHEA-COMP:10147"/>
        <dbReference type="ChEBI" id="CHEBI:15378"/>
        <dbReference type="ChEBI" id="CHEBI:57856"/>
        <dbReference type="ChEBI" id="CHEBI:59789"/>
        <dbReference type="ChEBI" id="CHEBI:73542"/>
        <dbReference type="ChEBI" id="CHEBI:74269"/>
        <dbReference type="EC" id="2.1.1.228"/>
    </reaction>
</comment>
<comment type="subunit">
    <text evidence="1">Monomer.</text>
</comment>
<comment type="subcellular location">
    <subcellularLocation>
        <location evidence="1">Mitochondrion matrix</location>
    </subcellularLocation>
    <subcellularLocation>
        <location evidence="1">Nucleus</location>
    </subcellularLocation>
    <subcellularLocation>
        <location evidence="1">Cytoplasm</location>
    </subcellularLocation>
    <text evidence="1">Predominantly in the mitochondria and in the nucleus.</text>
</comment>
<comment type="similarity">
    <text evidence="2">Belongs to the class I-like SAM-binding methyltransferase superfamily. TRM5/TYW2 family.</text>
</comment>